<name>AGUA_STRMU</name>
<evidence type="ECO:0000255" key="1">
    <source>
        <dbReference type="HAMAP-Rule" id="MF_01841"/>
    </source>
</evidence>
<evidence type="ECO:0007829" key="2">
    <source>
        <dbReference type="PDB" id="2EWO"/>
    </source>
</evidence>
<proteinExistence type="evidence at protein level"/>
<feature type="chain" id="PRO_0000194344" description="Putative agmatine deiminase">
    <location>
        <begin position="1"/>
        <end position="369"/>
    </location>
</feature>
<feature type="active site" description="Amidino-cysteine intermediate" evidence="1">
    <location>
        <position position="361"/>
    </location>
</feature>
<feature type="helix" evidence="2">
    <location>
        <begin position="10"/>
        <end position="13"/>
    </location>
</feature>
<feature type="strand" evidence="2">
    <location>
        <begin position="24"/>
        <end position="29"/>
    </location>
</feature>
<feature type="turn" evidence="2">
    <location>
        <begin position="35"/>
        <end position="37"/>
    </location>
</feature>
<feature type="helix" evidence="2">
    <location>
        <begin position="40"/>
        <end position="42"/>
    </location>
</feature>
<feature type="helix" evidence="2">
    <location>
        <begin position="43"/>
        <end position="57"/>
    </location>
</feature>
<feature type="strand" evidence="2">
    <location>
        <begin position="62"/>
        <end position="66"/>
    </location>
</feature>
<feature type="helix" evidence="2">
    <location>
        <begin position="68"/>
        <end position="70"/>
    </location>
</feature>
<feature type="helix" evidence="2">
    <location>
        <begin position="71"/>
        <end position="79"/>
    </location>
</feature>
<feature type="turn" evidence="2">
    <location>
        <begin position="80"/>
        <end position="82"/>
    </location>
</feature>
<feature type="strand" evidence="2">
    <location>
        <begin position="85"/>
        <end position="90"/>
    </location>
</feature>
<feature type="turn" evidence="2">
    <location>
        <begin position="98"/>
        <end position="100"/>
    </location>
</feature>
<feature type="strand" evidence="2">
    <location>
        <begin position="104"/>
        <end position="107"/>
    </location>
</feature>
<feature type="strand" evidence="2">
    <location>
        <begin position="109"/>
        <end position="111"/>
    </location>
</feature>
<feature type="strand" evidence="2">
    <location>
        <begin position="113"/>
        <end position="119"/>
    </location>
</feature>
<feature type="turn" evidence="2">
    <location>
        <begin position="122"/>
        <end position="128"/>
    </location>
</feature>
<feature type="strand" evidence="2">
    <location>
        <begin position="130"/>
        <end position="132"/>
    </location>
</feature>
<feature type="helix" evidence="2">
    <location>
        <begin position="137"/>
        <end position="146"/>
    </location>
</feature>
<feature type="turn" evidence="2">
    <location>
        <begin position="147"/>
        <end position="149"/>
    </location>
</feature>
<feature type="strand" evidence="2">
    <location>
        <begin position="152"/>
        <end position="159"/>
    </location>
</feature>
<feature type="helix" evidence="2">
    <location>
        <begin position="162"/>
        <end position="164"/>
    </location>
</feature>
<feature type="strand" evidence="2">
    <location>
        <begin position="165"/>
        <end position="168"/>
    </location>
</feature>
<feature type="turn" evidence="2">
    <location>
        <begin position="169"/>
        <end position="171"/>
    </location>
</feature>
<feature type="strand" evidence="2">
    <location>
        <begin position="172"/>
        <end position="176"/>
    </location>
</feature>
<feature type="helix" evidence="2">
    <location>
        <begin position="177"/>
        <end position="180"/>
    </location>
</feature>
<feature type="helix" evidence="2">
    <location>
        <begin position="191"/>
        <end position="202"/>
    </location>
</feature>
<feature type="strand" evidence="2">
    <location>
        <begin position="205"/>
        <end position="210"/>
    </location>
</feature>
<feature type="turn" evidence="2">
    <location>
        <begin position="216"/>
        <end position="219"/>
    </location>
</feature>
<feature type="turn" evidence="2">
    <location>
        <begin position="224"/>
        <end position="226"/>
    </location>
</feature>
<feature type="strand" evidence="2">
    <location>
        <begin position="227"/>
        <end position="231"/>
    </location>
</feature>
<feature type="strand" evidence="2">
    <location>
        <begin position="234"/>
        <end position="238"/>
    </location>
</feature>
<feature type="helix" evidence="2">
    <location>
        <begin position="248"/>
        <end position="259"/>
    </location>
</feature>
<feature type="strand" evidence="2">
    <location>
        <begin position="264"/>
        <end position="266"/>
    </location>
</feature>
<feature type="helix" evidence="2">
    <location>
        <begin position="286"/>
        <end position="288"/>
    </location>
</feature>
<feature type="strand" evidence="2">
    <location>
        <begin position="293"/>
        <end position="295"/>
    </location>
</feature>
<feature type="strand" evidence="2">
    <location>
        <begin position="312"/>
        <end position="314"/>
    </location>
</feature>
<feature type="strand" evidence="2">
    <location>
        <begin position="317"/>
        <end position="321"/>
    </location>
</feature>
<feature type="helix" evidence="2">
    <location>
        <begin position="328"/>
        <end position="338"/>
    </location>
</feature>
<feature type="strand" evidence="2">
    <location>
        <begin position="342"/>
        <end position="347"/>
    </location>
</feature>
<feature type="helix" evidence="2">
    <location>
        <begin position="350"/>
        <end position="353"/>
    </location>
</feature>
<feature type="turn" evidence="2">
    <location>
        <begin position="359"/>
        <end position="362"/>
    </location>
</feature>
<feature type="strand" evidence="2">
    <location>
        <begin position="364"/>
        <end position="367"/>
    </location>
</feature>
<gene>
    <name evidence="1" type="primary">aguA</name>
    <name type="ordered locus">SMU_264</name>
</gene>
<organism>
    <name type="scientific">Streptococcus mutans serotype c (strain ATCC 700610 / UA159)</name>
    <dbReference type="NCBI Taxonomy" id="210007"/>
    <lineage>
        <taxon>Bacteria</taxon>
        <taxon>Bacillati</taxon>
        <taxon>Bacillota</taxon>
        <taxon>Bacilli</taxon>
        <taxon>Lactobacillales</taxon>
        <taxon>Streptococcaceae</taxon>
        <taxon>Streptococcus</taxon>
    </lineage>
</organism>
<protein>
    <recommendedName>
        <fullName evidence="1">Putative agmatine deiminase</fullName>
        <ecNumber evidence="1">3.5.3.12</ecNumber>
    </recommendedName>
    <alternativeName>
        <fullName evidence="1">Agmatine iminohydrolase</fullName>
    </alternativeName>
</protein>
<keyword id="KW-0002">3D-structure</keyword>
<keyword id="KW-0378">Hydrolase</keyword>
<keyword id="KW-1185">Reference proteome</keyword>
<reference key="1">
    <citation type="journal article" date="2002" name="Proc. Natl. Acad. Sci. U.S.A.">
        <title>Genome sequence of Streptococcus mutans UA159, a cariogenic dental pathogen.</title>
        <authorList>
            <person name="Ajdic D.J."/>
            <person name="McShan W.M."/>
            <person name="McLaughlin R.E."/>
            <person name="Savic G."/>
            <person name="Chang J."/>
            <person name="Carson M.B."/>
            <person name="Primeaux C."/>
            <person name="Tian R."/>
            <person name="Kenton S."/>
            <person name="Jia H.G."/>
            <person name="Lin S.P."/>
            <person name="Qian Y."/>
            <person name="Li S."/>
            <person name="Zhu H."/>
            <person name="Najar F.Z."/>
            <person name="Lai H."/>
            <person name="White J."/>
            <person name="Roe B.A."/>
            <person name="Ferretti J.J."/>
        </authorList>
    </citation>
    <scope>NUCLEOTIDE SEQUENCE [LARGE SCALE GENOMIC DNA]</scope>
    <source>
        <strain>ATCC 700610 / UA159</strain>
    </source>
</reference>
<reference key="2">
    <citation type="journal article" date="2004" name="J. Bacteriol.">
        <title>Analysis of an agmatine deiminase gene cluster in Streptococcus mutans UA159.</title>
        <authorList>
            <person name="Griswold A.R."/>
            <person name="Chen Y.-Y.M."/>
            <person name="Burne R.A."/>
        </authorList>
    </citation>
    <scope>IDENTIFICATION</scope>
    <source>
        <strain>ATCC 700610 / UA159</strain>
    </source>
</reference>
<sequence length="369" mass="41837">MAKRIKNTTPKQDGFRMPGEFEKQKQIWMLWPWRNDNWRLGAKPAQKAFLEVAEAISEFEPVSLCVPPLQYENALARVSELGSHNIRIIEMTNDDAWIRDCGPTFLVNDKGDLRAVDWEFNAWGGLVDGLYFPWDQDALVARKVCEIEGVDSYKTKDFVLEGGSIHVDGEGTVLVTEMCLLHPSRNPHLTKEDIEDKLKDYLNCVKVLWVKDGIDPYETNGHIDDVACFIRPGEVACIYTDDKEHPFYQEAKAAYDFLSQQTDAKGRPLKVHKMCVTKEPCYLQEAATIDYVEGSIPREEGEMAIASYLNFLIVNGGIILPQYGDENDQLAKQQVQEMFPDRKVVGVRTEEIAYGGGNIHCITQQQPAT</sequence>
<dbReference type="EC" id="3.5.3.12" evidence="1"/>
<dbReference type="EMBL" id="AE014133">
    <property type="protein sequence ID" value="AAN58033.1"/>
    <property type="molecule type" value="Genomic_DNA"/>
</dbReference>
<dbReference type="EMBL" id="BK004003">
    <property type="protein sequence ID" value="DAA04558.1"/>
    <property type="molecule type" value="Genomic_DNA"/>
</dbReference>
<dbReference type="RefSeq" id="NP_720727.1">
    <property type="nucleotide sequence ID" value="NC_004350.2"/>
</dbReference>
<dbReference type="RefSeq" id="WP_002262731.1">
    <property type="nucleotide sequence ID" value="NC_004350.2"/>
</dbReference>
<dbReference type="PDB" id="2EWO">
    <property type="method" value="X-ray"/>
    <property type="resolution" value="2.90 A"/>
    <property type="chains" value="A/B/C/D/E/F/G/H/I/J/K/L=1-369"/>
</dbReference>
<dbReference type="PDBsum" id="2EWO"/>
<dbReference type="SMR" id="Q8DW17"/>
<dbReference type="STRING" id="210007.SMU_264"/>
<dbReference type="BindingDB" id="Q8DW17"/>
<dbReference type="ChEMBL" id="CHEMBL3559648"/>
<dbReference type="KEGG" id="smu:SMU_264"/>
<dbReference type="PATRIC" id="fig|210007.7.peg.230"/>
<dbReference type="eggNOG" id="COG2957">
    <property type="taxonomic scope" value="Bacteria"/>
</dbReference>
<dbReference type="HOGENOM" id="CLU_037682_0_0_9"/>
<dbReference type="OrthoDB" id="9808013at2"/>
<dbReference type="PhylomeDB" id="Q8DW17"/>
<dbReference type="EvolutionaryTrace" id="Q8DW17"/>
<dbReference type="Proteomes" id="UP000002512">
    <property type="component" value="Chromosome"/>
</dbReference>
<dbReference type="GO" id="GO:0047632">
    <property type="term" value="F:agmatine deiminase activity"/>
    <property type="evidence" value="ECO:0007669"/>
    <property type="project" value="UniProtKB-UniRule"/>
</dbReference>
<dbReference type="GO" id="GO:0004668">
    <property type="term" value="F:protein-arginine deiminase activity"/>
    <property type="evidence" value="ECO:0007669"/>
    <property type="project" value="InterPro"/>
</dbReference>
<dbReference type="GO" id="GO:0009446">
    <property type="term" value="P:putrescine biosynthetic process"/>
    <property type="evidence" value="ECO:0007669"/>
    <property type="project" value="InterPro"/>
</dbReference>
<dbReference type="Gene3D" id="3.75.10.10">
    <property type="entry name" value="L-arginine/glycine Amidinotransferase, Chain A"/>
    <property type="match status" value="1"/>
</dbReference>
<dbReference type="HAMAP" id="MF_01841">
    <property type="entry name" value="Agmatine_deimin"/>
    <property type="match status" value="1"/>
</dbReference>
<dbReference type="InterPro" id="IPR017754">
    <property type="entry name" value="Agmatine_deiminase"/>
</dbReference>
<dbReference type="InterPro" id="IPR007466">
    <property type="entry name" value="Peptidyl-Arg-deiminase_porph"/>
</dbReference>
<dbReference type="NCBIfam" id="TIGR03380">
    <property type="entry name" value="agmatine_aguA"/>
    <property type="match status" value="1"/>
</dbReference>
<dbReference type="NCBIfam" id="NF010070">
    <property type="entry name" value="PRK13551.1"/>
    <property type="match status" value="1"/>
</dbReference>
<dbReference type="PANTHER" id="PTHR31377">
    <property type="entry name" value="AGMATINE DEIMINASE-RELATED"/>
    <property type="match status" value="1"/>
</dbReference>
<dbReference type="PANTHER" id="PTHR31377:SF0">
    <property type="entry name" value="AGMATINE DEIMINASE-RELATED"/>
    <property type="match status" value="1"/>
</dbReference>
<dbReference type="Pfam" id="PF04371">
    <property type="entry name" value="PAD_porph"/>
    <property type="match status" value="1"/>
</dbReference>
<dbReference type="SUPFAM" id="SSF55909">
    <property type="entry name" value="Pentein"/>
    <property type="match status" value="1"/>
</dbReference>
<accession>Q8DW17</accession>
<accession>Q6IFZ0</accession>
<comment type="catalytic activity">
    <reaction evidence="1">
        <text>agmatine + H2O = N-carbamoylputrescine + NH4(+)</text>
        <dbReference type="Rhea" id="RHEA:18037"/>
        <dbReference type="ChEBI" id="CHEBI:15377"/>
        <dbReference type="ChEBI" id="CHEBI:28938"/>
        <dbReference type="ChEBI" id="CHEBI:58145"/>
        <dbReference type="ChEBI" id="CHEBI:58318"/>
        <dbReference type="EC" id="3.5.3.12"/>
    </reaction>
</comment>
<comment type="similarity">
    <text evidence="1">Belongs to the agmatine deiminase family.</text>
</comment>